<proteinExistence type="inferred from homology"/>
<feature type="chain" id="PRO_1000052637" description="Large ribosomal subunit protein uL22">
    <location>
        <begin position="1"/>
        <end position="119"/>
    </location>
</feature>
<protein>
    <recommendedName>
        <fullName evidence="1">Large ribosomal subunit protein uL22</fullName>
    </recommendedName>
    <alternativeName>
        <fullName evidence="2">50S ribosomal protein L22</fullName>
    </alternativeName>
</protein>
<organism>
    <name type="scientific">Rickettsia akari (strain Hartford)</name>
    <dbReference type="NCBI Taxonomy" id="293614"/>
    <lineage>
        <taxon>Bacteria</taxon>
        <taxon>Pseudomonadati</taxon>
        <taxon>Pseudomonadota</taxon>
        <taxon>Alphaproteobacteria</taxon>
        <taxon>Rickettsiales</taxon>
        <taxon>Rickettsiaceae</taxon>
        <taxon>Rickettsieae</taxon>
        <taxon>Rickettsia</taxon>
        <taxon>spotted fever group</taxon>
    </lineage>
</organism>
<evidence type="ECO:0000255" key="1">
    <source>
        <dbReference type="HAMAP-Rule" id="MF_01331"/>
    </source>
</evidence>
<evidence type="ECO:0000305" key="2"/>
<reference key="1">
    <citation type="submission" date="2007-09" db="EMBL/GenBank/DDBJ databases">
        <title>Complete genome sequence of Rickettsia akari.</title>
        <authorList>
            <person name="Madan A."/>
            <person name="Fahey J."/>
            <person name="Helton E."/>
            <person name="Ketteman M."/>
            <person name="Madan A."/>
            <person name="Rodrigues S."/>
            <person name="Sanchez A."/>
            <person name="Whiting M."/>
            <person name="Dasch G."/>
            <person name="Eremeeva M."/>
        </authorList>
    </citation>
    <scope>NUCLEOTIDE SEQUENCE [LARGE SCALE GENOMIC DNA]</scope>
    <source>
        <strain>Hartford</strain>
    </source>
</reference>
<accession>A8GPE5</accession>
<comment type="function">
    <text evidence="1">This protein binds specifically to 23S rRNA; its binding is stimulated by other ribosomal proteins, e.g. L4, L17, and L20. It is important during the early stages of 50S assembly. It makes multiple contacts with different domains of the 23S rRNA in the assembled 50S subunit and ribosome (By similarity).</text>
</comment>
<comment type="function">
    <text evidence="1">The globular domain of the protein is located near the polypeptide exit tunnel on the outside of the subunit, while an extended beta-hairpin is found that lines the wall of the exit tunnel in the center of the 70S ribosome.</text>
</comment>
<comment type="subunit">
    <text evidence="1">Part of the 50S ribosomal subunit.</text>
</comment>
<comment type="similarity">
    <text evidence="1">Belongs to the universal ribosomal protein uL22 family.</text>
</comment>
<sequence length="119" mass="13195">MVQENKNFATAKAKSVRVSPRKLNLVAAFIRNMKVSEALVQLTFSSKRIAKVVKGCLQSAVANAENNLGLDIDRLVITKATVGKALVMKRVMPRAKGRATRINKFFSNLYITVTEKEDN</sequence>
<keyword id="KW-0687">Ribonucleoprotein</keyword>
<keyword id="KW-0689">Ribosomal protein</keyword>
<keyword id="KW-0694">RNA-binding</keyword>
<keyword id="KW-0699">rRNA-binding</keyword>
<gene>
    <name evidence="1" type="primary">rplV</name>
    <name type="ordered locus">A1C_05080</name>
</gene>
<dbReference type="EMBL" id="CP000847">
    <property type="protein sequence ID" value="ABV75270.1"/>
    <property type="molecule type" value="Genomic_DNA"/>
</dbReference>
<dbReference type="RefSeq" id="WP_012149900.1">
    <property type="nucleotide sequence ID" value="NC_009881.1"/>
</dbReference>
<dbReference type="SMR" id="A8GPE5"/>
<dbReference type="STRING" id="293614.A1C_05080"/>
<dbReference type="KEGG" id="rak:A1C_05080"/>
<dbReference type="eggNOG" id="COG0091">
    <property type="taxonomic scope" value="Bacteria"/>
</dbReference>
<dbReference type="HOGENOM" id="CLU_083987_3_0_5"/>
<dbReference type="Proteomes" id="UP000006830">
    <property type="component" value="Chromosome"/>
</dbReference>
<dbReference type="GO" id="GO:0022625">
    <property type="term" value="C:cytosolic large ribosomal subunit"/>
    <property type="evidence" value="ECO:0007669"/>
    <property type="project" value="TreeGrafter"/>
</dbReference>
<dbReference type="GO" id="GO:0019843">
    <property type="term" value="F:rRNA binding"/>
    <property type="evidence" value="ECO:0007669"/>
    <property type="project" value="UniProtKB-UniRule"/>
</dbReference>
<dbReference type="GO" id="GO:0003735">
    <property type="term" value="F:structural constituent of ribosome"/>
    <property type="evidence" value="ECO:0007669"/>
    <property type="project" value="InterPro"/>
</dbReference>
<dbReference type="GO" id="GO:0006412">
    <property type="term" value="P:translation"/>
    <property type="evidence" value="ECO:0007669"/>
    <property type="project" value="UniProtKB-UniRule"/>
</dbReference>
<dbReference type="CDD" id="cd00336">
    <property type="entry name" value="Ribosomal_L22"/>
    <property type="match status" value="1"/>
</dbReference>
<dbReference type="Gene3D" id="3.90.470.10">
    <property type="entry name" value="Ribosomal protein L22/L17"/>
    <property type="match status" value="1"/>
</dbReference>
<dbReference type="HAMAP" id="MF_01331_B">
    <property type="entry name" value="Ribosomal_uL22_B"/>
    <property type="match status" value="1"/>
</dbReference>
<dbReference type="InterPro" id="IPR001063">
    <property type="entry name" value="Ribosomal_uL22"/>
</dbReference>
<dbReference type="InterPro" id="IPR005727">
    <property type="entry name" value="Ribosomal_uL22_bac/chlpt-type"/>
</dbReference>
<dbReference type="InterPro" id="IPR047867">
    <property type="entry name" value="Ribosomal_uL22_bac/org-type"/>
</dbReference>
<dbReference type="InterPro" id="IPR018260">
    <property type="entry name" value="Ribosomal_uL22_CS"/>
</dbReference>
<dbReference type="InterPro" id="IPR036394">
    <property type="entry name" value="Ribosomal_uL22_sf"/>
</dbReference>
<dbReference type="NCBIfam" id="TIGR01044">
    <property type="entry name" value="rplV_bact"/>
    <property type="match status" value="1"/>
</dbReference>
<dbReference type="PANTHER" id="PTHR13501">
    <property type="entry name" value="CHLOROPLAST 50S RIBOSOMAL PROTEIN L22-RELATED"/>
    <property type="match status" value="1"/>
</dbReference>
<dbReference type="PANTHER" id="PTHR13501:SF8">
    <property type="entry name" value="LARGE RIBOSOMAL SUBUNIT PROTEIN UL22M"/>
    <property type="match status" value="1"/>
</dbReference>
<dbReference type="Pfam" id="PF00237">
    <property type="entry name" value="Ribosomal_L22"/>
    <property type="match status" value="1"/>
</dbReference>
<dbReference type="SUPFAM" id="SSF54843">
    <property type="entry name" value="Ribosomal protein L22"/>
    <property type="match status" value="1"/>
</dbReference>
<dbReference type="PROSITE" id="PS00464">
    <property type="entry name" value="RIBOSOMAL_L22"/>
    <property type="match status" value="1"/>
</dbReference>
<name>RL22_RICAH</name>